<reference key="1">
    <citation type="journal article" date="2004" name="Nat. Genet.">
        <title>Complete sequencing and characterization of 21,243 full-length human cDNAs.</title>
        <authorList>
            <person name="Ota T."/>
            <person name="Suzuki Y."/>
            <person name="Nishikawa T."/>
            <person name="Otsuki T."/>
            <person name="Sugiyama T."/>
            <person name="Irie R."/>
            <person name="Wakamatsu A."/>
            <person name="Hayashi K."/>
            <person name="Sato H."/>
            <person name="Nagai K."/>
            <person name="Kimura K."/>
            <person name="Makita H."/>
            <person name="Sekine M."/>
            <person name="Obayashi M."/>
            <person name="Nishi T."/>
            <person name="Shibahara T."/>
            <person name="Tanaka T."/>
            <person name="Ishii S."/>
            <person name="Yamamoto J."/>
            <person name="Saito K."/>
            <person name="Kawai Y."/>
            <person name="Isono Y."/>
            <person name="Nakamura Y."/>
            <person name="Nagahari K."/>
            <person name="Murakami K."/>
            <person name="Yasuda T."/>
            <person name="Iwayanagi T."/>
            <person name="Wagatsuma M."/>
            <person name="Shiratori A."/>
            <person name="Sudo H."/>
            <person name="Hosoiri T."/>
            <person name="Kaku Y."/>
            <person name="Kodaira H."/>
            <person name="Kondo H."/>
            <person name="Sugawara M."/>
            <person name="Takahashi M."/>
            <person name="Kanda K."/>
            <person name="Yokoi T."/>
            <person name="Furuya T."/>
            <person name="Kikkawa E."/>
            <person name="Omura Y."/>
            <person name="Abe K."/>
            <person name="Kamihara K."/>
            <person name="Katsuta N."/>
            <person name="Sato K."/>
            <person name="Tanikawa M."/>
            <person name="Yamazaki M."/>
            <person name="Ninomiya K."/>
            <person name="Ishibashi T."/>
            <person name="Yamashita H."/>
            <person name="Murakawa K."/>
            <person name="Fujimori K."/>
            <person name="Tanai H."/>
            <person name="Kimata M."/>
            <person name="Watanabe M."/>
            <person name="Hiraoka S."/>
            <person name="Chiba Y."/>
            <person name="Ishida S."/>
            <person name="Ono Y."/>
            <person name="Takiguchi S."/>
            <person name="Watanabe S."/>
            <person name="Yosida M."/>
            <person name="Hotuta T."/>
            <person name="Kusano J."/>
            <person name="Kanehori K."/>
            <person name="Takahashi-Fujii A."/>
            <person name="Hara H."/>
            <person name="Tanase T.-O."/>
            <person name="Nomura Y."/>
            <person name="Togiya S."/>
            <person name="Komai F."/>
            <person name="Hara R."/>
            <person name="Takeuchi K."/>
            <person name="Arita M."/>
            <person name="Imose N."/>
            <person name="Musashino K."/>
            <person name="Yuuki H."/>
            <person name="Oshima A."/>
            <person name="Sasaki N."/>
            <person name="Aotsuka S."/>
            <person name="Yoshikawa Y."/>
            <person name="Matsunawa H."/>
            <person name="Ichihara T."/>
            <person name="Shiohata N."/>
            <person name="Sano S."/>
            <person name="Moriya S."/>
            <person name="Momiyama H."/>
            <person name="Satoh N."/>
            <person name="Takami S."/>
            <person name="Terashima Y."/>
            <person name="Suzuki O."/>
            <person name="Nakagawa S."/>
            <person name="Senoh A."/>
            <person name="Mizoguchi H."/>
            <person name="Goto Y."/>
            <person name="Shimizu F."/>
            <person name="Wakebe H."/>
            <person name="Hishigaki H."/>
            <person name="Watanabe T."/>
            <person name="Sugiyama A."/>
            <person name="Takemoto M."/>
            <person name="Kawakami B."/>
            <person name="Yamazaki M."/>
            <person name="Watanabe K."/>
            <person name="Kumagai A."/>
            <person name="Itakura S."/>
            <person name="Fukuzumi Y."/>
            <person name="Fujimori Y."/>
            <person name="Komiyama M."/>
            <person name="Tashiro H."/>
            <person name="Tanigami A."/>
            <person name="Fujiwara T."/>
            <person name="Ono T."/>
            <person name="Yamada K."/>
            <person name="Fujii Y."/>
            <person name="Ozaki K."/>
            <person name="Hirao M."/>
            <person name="Ohmori Y."/>
            <person name="Kawabata A."/>
            <person name="Hikiji T."/>
            <person name="Kobatake N."/>
            <person name="Inagaki H."/>
            <person name="Ikema Y."/>
            <person name="Okamoto S."/>
            <person name="Okitani R."/>
            <person name="Kawakami T."/>
            <person name="Noguchi S."/>
            <person name="Itoh T."/>
            <person name="Shigeta K."/>
            <person name="Senba T."/>
            <person name="Matsumura K."/>
            <person name="Nakajima Y."/>
            <person name="Mizuno T."/>
            <person name="Morinaga M."/>
            <person name="Sasaki M."/>
            <person name="Togashi T."/>
            <person name="Oyama M."/>
            <person name="Hata H."/>
            <person name="Watanabe M."/>
            <person name="Komatsu T."/>
            <person name="Mizushima-Sugano J."/>
            <person name="Satoh T."/>
            <person name="Shirai Y."/>
            <person name="Takahashi Y."/>
            <person name="Nakagawa K."/>
            <person name="Okumura K."/>
            <person name="Nagase T."/>
            <person name="Nomura N."/>
            <person name="Kikuchi H."/>
            <person name="Masuho Y."/>
            <person name="Yamashita R."/>
            <person name="Nakai K."/>
            <person name="Yada T."/>
            <person name="Nakamura Y."/>
            <person name="Ohara O."/>
            <person name="Isogai T."/>
            <person name="Sugano S."/>
        </authorList>
    </citation>
    <scope>NUCLEOTIDE SEQUENCE [LARGE SCALE MRNA]</scope>
    <scope>VARIANT HIS-525</scope>
</reference>
<reference key="2">
    <citation type="journal article" date="2005" name="Nature">
        <title>Generation and annotation of the DNA sequences of human chromosomes 2 and 4.</title>
        <authorList>
            <person name="Hillier L.W."/>
            <person name="Graves T.A."/>
            <person name="Fulton R.S."/>
            <person name="Fulton L.A."/>
            <person name="Pepin K.H."/>
            <person name="Minx P."/>
            <person name="Wagner-McPherson C."/>
            <person name="Layman D."/>
            <person name="Wylie K."/>
            <person name="Sekhon M."/>
            <person name="Becker M.C."/>
            <person name="Fewell G.A."/>
            <person name="Delehaunty K.D."/>
            <person name="Miner T.L."/>
            <person name="Nash W.E."/>
            <person name="Kremitzki C."/>
            <person name="Oddy L."/>
            <person name="Du H."/>
            <person name="Sun H."/>
            <person name="Bradshaw-Cordum H."/>
            <person name="Ali J."/>
            <person name="Carter J."/>
            <person name="Cordes M."/>
            <person name="Harris A."/>
            <person name="Isak A."/>
            <person name="van Brunt A."/>
            <person name="Nguyen C."/>
            <person name="Du F."/>
            <person name="Courtney L."/>
            <person name="Kalicki J."/>
            <person name="Ozersky P."/>
            <person name="Abbott S."/>
            <person name="Armstrong J."/>
            <person name="Belter E.A."/>
            <person name="Caruso L."/>
            <person name="Cedroni M."/>
            <person name="Cotton M."/>
            <person name="Davidson T."/>
            <person name="Desai A."/>
            <person name="Elliott G."/>
            <person name="Erb T."/>
            <person name="Fronick C."/>
            <person name="Gaige T."/>
            <person name="Haakenson W."/>
            <person name="Haglund K."/>
            <person name="Holmes A."/>
            <person name="Harkins R."/>
            <person name="Kim K."/>
            <person name="Kruchowski S.S."/>
            <person name="Strong C.M."/>
            <person name="Grewal N."/>
            <person name="Goyea E."/>
            <person name="Hou S."/>
            <person name="Levy A."/>
            <person name="Martinka S."/>
            <person name="Mead K."/>
            <person name="McLellan M.D."/>
            <person name="Meyer R."/>
            <person name="Randall-Maher J."/>
            <person name="Tomlinson C."/>
            <person name="Dauphin-Kohlberg S."/>
            <person name="Kozlowicz-Reilly A."/>
            <person name="Shah N."/>
            <person name="Swearengen-Shahid S."/>
            <person name="Snider J."/>
            <person name="Strong J.T."/>
            <person name="Thompson J."/>
            <person name="Yoakum M."/>
            <person name="Leonard S."/>
            <person name="Pearman C."/>
            <person name="Trani L."/>
            <person name="Radionenko M."/>
            <person name="Waligorski J.E."/>
            <person name="Wang C."/>
            <person name="Rock S.M."/>
            <person name="Tin-Wollam A.-M."/>
            <person name="Maupin R."/>
            <person name="Latreille P."/>
            <person name="Wendl M.C."/>
            <person name="Yang S.-P."/>
            <person name="Pohl C."/>
            <person name="Wallis J.W."/>
            <person name="Spieth J."/>
            <person name="Bieri T.A."/>
            <person name="Berkowicz N."/>
            <person name="Nelson J.O."/>
            <person name="Osborne J."/>
            <person name="Ding L."/>
            <person name="Meyer R."/>
            <person name="Sabo A."/>
            <person name="Shotland Y."/>
            <person name="Sinha P."/>
            <person name="Wohldmann P.E."/>
            <person name="Cook L.L."/>
            <person name="Hickenbotham M.T."/>
            <person name="Eldred J."/>
            <person name="Williams D."/>
            <person name="Jones T.A."/>
            <person name="She X."/>
            <person name="Ciccarelli F.D."/>
            <person name="Izaurralde E."/>
            <person name="Taylor J."/>
            <person name="Schmutz J."/>
            <person name="Myers R.M."/>
            <person name="Cox D.R."/>
            <person name="Huang X."/>
            <person name="McPherson J.D."/>
            <person name="Mardis E.R."/>
            <person name="Clifton S.W."/>
            <person name="Warren W.C."/>
            <person name="Chinwalla A.T."/>
            <person name="Eddy S.R."/>
            <person name="Marra M.A."/>
            <person name="Ovcharenko I."/>
            <person name="Furey T.S."/>
            <person name="Miller W."/>
            <person name="Eichler E.E."/>
            <person name="Bork P."/>
            <person name="Suyama M."/>
            <person name="Torrents D."/>
            <person name="Waterston R.H."/>
            <person name="Wilson R.K."/>
        </authorList>
    </citation>
    <scope>NUCLEOTIDE SEQUENCE [LARGE SCALE GENOMIC DNA]</scope>
</reference>
<reference key="3">
    <citation type="journal article" date="2004" name="Genome Res.">
        <title>The status, quality, and expansion of the NIH full-length cDNA project: the Mammalian Gene Collection (MGC).</title>
        <authorList>
            <consortium name="The MGC Project Team"/>
        </authorList>
    </citation>
    <scope>NUCLEOTIDE SEQUENCE [LARGE SCALE MRNA]</scope>
    <source>
        <tissue>Cervix</tissue>
        <tissue>Uterus</tissue>
    </source>
</reference>
<reference key="4">
    <citation type="journal article" date="2011" name="BMC Syst. Biol.">
        <title>Initial characterization of the human central proteome.</title>
        <authorList>
            <person name="Burkard T.R."/>
            <person name="Planyavsky M."/>
            <person name="Kaupe I."/>
            <person name="Breitwieser F.P."/>
            <person name="Buerckstuemmer T."/>
            <person name="Bennett K.L."/>
            <person name="Superti-Furga G."/>
            <person name="Colinge J."/>
        </authorList>
    </citation>
    <scope>IDENTIFICATION BY MASS SPECTROMETRY [LARGE SCALE ANALYSIS]</scope>
</reference>
<feature type="chain" id="PRO_0000295096" description="Tetratricopeptide repeat protein 27">
    <location>
        <begin position="1"/>
        <end position="843"/>
    </location>
</feature>
<feature type="repeat" description="TPR 1">
    <location>
        <begin position="453"/>
        <end position="486"/>
    </location>
</feature>
<feature type="repeat" description="TPR 2">
    <location>
        <begin position="492"/>
        <end position="525"/>
    </location>
</feature>
<feature type="repeat" description="TPR 3">
    <location>
        <begin position="527"/>
        <end position="560"/>
    </location>
</feature>
<feature type="repeat" description="TPR 4">
    <location>
        <begin position="561"/>
        <end position="594"/>
    </location>
</feature>
<feature type="repeat" description="TPR 5">
    <location>
        <begin position="596"/>
        <end position="628"/>
    </location>
</feature>
<feature type="repeat" description="TPR 6">
    <location>
        <begin position="629"/>
        <end position="662"/>
    </location>
</feature>
<feature type="sequence variant" id="VAR_033207" description="In dbSNP:rs2273660.">
    <original>Y</original>
    <variation>C</variation>
    <location>
        <position position="476"/>
    </location>
</feature>
<feature type="sequence variant" id="VAR_061905" description="In dbSNP:rs34188947.">
    <original>T</original>
    <variation>M</variation>
    <location>
        <position position="498"/>
    </location>
</feature>
<feature type="sequence variant" id="VAR_033208" description="In dbSNP:rs2273664." evidence="1">
    <original>R</original>
    <variation>H</variation>
    <location>
        <position position="525"/>
    </location>
</feature>
<feature type="sequence variant" id="VAR_052628" description="In dbSNP:rs17012268.">
    <original>R</original>
    <variation>H</variation>
    <location>
        <position position="586"/>
    </location>
</feature>
<feature type="sequence conflict" description="In Ref. 1; BAA91315." evidence="2" ref="1">
    <original>V</original>
    <variation>A</variation>
    <location>
        <position position="563"/>
    </location>
</feature>
<feature type="sequence conflict" description="In Ref. 1; BAB55206." evidence="2" ref="1">
    <original>E</original>
    <variation>G</variation>
    <location>
        <position position="627"/>
    </location>
</feature>
<feature type="sequence conflict" description="In Ref. 1; BAB55206." evidence="2" ref="1">
    <original>S</original>
    <variation>P</variation>
    <location>
        <position position="756"/>
    </location>
</feature>
<organism>
    <name type="scientific">Homo sapiens</name>
    <name type="common">Human</name>
    <dbReference type="NCBI Taxonomy" id="9606"/>
    <lineage>
        <taxon>Eukaryota</taxon>
        <taxon>Metazoa</taxon>
        <taxon>Chordata</taxon>
        <taxon>Craniata</taxon>
        <taxon>Vertebrata</taxon>
        <taxon>Euteleostomi</taxon>
        <taxon>Mammalia</taxon>
        <taxon>Eutheria</taxon>
        <taxon>Euarchontoglires</taxon>
        <taxon>Primates</taxon>
        <taxon>Haplorrhini</taxon>
        <taxon>Catarrhini</taxon>
        <taxon>Hominidae</taxon>
        <taxon>Homo</taxon>
    </lineage>
</organism>
<keyword id="KW-1267">Proteomics identification</keyword>
<keyword id="KW-1185">Reference proteome</keyword>
<keyword id="KW-0677">Repeat</keyword>
<keyword id="KW-0802">TPR repeat</keyword>
<evidence type="ECO:0000269" key="1">
    <source>
    </source>
</evidence>
<evidence type="ECO:0000305" key="2"/>
<gene>
    <name type="primary">TTC27</name>
</gene>
<name>TTC27_HUMAN</name>
<dbReference type="EMBL" id="AK000279">
    <property type="protein sequence ID" value="BAA91048.1"/>
    <property type="status" value="ALT_INIT"/>
    <property type="molecule type" value="mRNA"/>
</dbReference>
<dbReference type="EMBL" id="AK000665">
    <property type="protein sequence ID" value="BAA91315.1"/>
    <property type="status" value="ALT_INIT"/>
    <property type="molecule type" value="mRNA"/>
</dbReference>
<dbReference type="EMBL" id="AK027570">
    <property type="protein sequence ID" value="BAB55206.1"/>
    <property type="molecule type" value="mRNA"/>
</dbReference>
<dbReference type="EMBL" id="AL133246">
    <property type="status" value="NOT_ANNOTATED_CDS"/>
    <property type="molecule type" value="Genomic_DNA"/>
</dbReference>
<dbReference type="EMBL" id="BC001248">
    <property type="protein sequence ID" value="AAH01248.2"/>
    <property type="molecule type" value="mRNA"/>
</dbReference>
<dbReference type="EMBL" id="BC063791">
    <property type="protein sequence ID" value="AAH63791.1"/>
    <property type="molecule type" value="mRNA"/>
</dbReference>
<dbReference type="CCDS" id="CCDS33176.1"/>
<dbReference type="RefSeq" id="NP_001180438.1">
    <property type="nucleotide sequence ID" value="NM_001193509.1"/>
</dbReference>
<dbReference type="RefSeq" id="NP_060205.3">
    <property type="nucleotide sequence ID" value="NM_017735.4"/>
</dbReference>
<dbReference type="SMR" id="Q6P3X3"/>
<dbReference type="BioGRID" id="120761">
    <property type="interactions" value="131"/>
</dbReference>
<dbReference type="FunCoup" id="Q6P3X3">
    <property type="interactions" value="1188"/>
</dbReference>
<dbReference type="IntAct" id="Q6P3X3">
    <property type="interactions" value="66"/>
</dbReference>
<dbReference type="MINT" id="Q6P3X3"/>
<dbReference type="STRING" id="9606.ENSP00000313953"/>
<dbReference type="GlyGen" id="Q6P3X3">
    <property type="glycosylation" value="2 sites, 1 O-linked glycan (1 site)"/>
</dbReference>
<dbReference type="iPTMnet" id="Q6P3X3"/>
<dbReference type="PhosphoSitePlus" id="Q6P3X3"/>
<dbReference type="BioMuta" id="TTC27"/>
<dbReference type="DMDM" id="74758258"/>
<dbReference type="jPOST" id="Q6P3X3"/>
<dbReference type="MassIVE" id="Q6P3X3"/>
<dbReference type="PaxDb" id="9606-ENSP00000313953"/>
<dbReference type="PeptideAtlas" id="Q6P3X3"/>
<dbReference type="ProteomicsDB" id="66938"/>
<dbReference type="Pumba" id="Q6P3X3"/>
<dbReference type="Antibodypedia" id="29210">
    <property type="antibodies" value="85 antibodies from 20 providers"/>
</dbReference>
<dbReference type="DNASU" id="55622"/>
<dbReference type="Ensembl" id="ENST00000317907.9">
    <property type="protein sequence ID" value="ENSP00000313953.4"/>
    <property type="gene ID" value="ENSG00000018699.13"/>
</dbReference>
<dbReference type="GeneID" id="55622"/>
<dbReference type="KEGG" id="hsa:55622"/>
<dbReference type="MANE-Select" id="ENST00000317907.9">
    <property type="protein sequence ID" value="ENSP00000313953.4"/>
    <property type="RefSeq nucleotide sequence ID" value="NM_017735.5"/>
    <property type="RefSeq protein sequence ID" value="NP_060205.3"/>
</dbReference>
<dbReference type="UCSC" id="uc002rom.4">
    <property type="organism name" value="human"/>
</dbReference>
<dbReference type="AGR" id="HGNC:25986"/>
<dbReference type="CTD" id="55622"/>
<dbReference type="DisGeNET" id="55622"/>
<dbReference type="GeneCards" id="TTC27"/>
<dbReference type="HGNC" id="HGNC:25986">
    <property type="gene designation" value="TTC27"/>
</dbReference>
<dbReference type="HPA" id="ENSG00000018699">
    <property type="expression patterns" value="Low tissue specificity"/>
</dbReference>
<dbReference type="neXtProt" id="NX_Q6P3X3"/>
<dbReference type="OpenTargets" id="ENSG00000018699"/>
<dbReference type="PharmGKB" id="PA145007326"/>
<dbReference type="VEuPathDB" id="HostDB:ENSG00000018699"/>
<dbReference type="eggNOG" id="KOG1128">
    <property type="taxonomic scope" value="Eukaryota"/>
</dbReference>
<dbReference type="GeneTree" id="ENSGT00500000044929"/>
<dbReference type="HOGENOM" id="CLU_004905_2_0_1"/>
<dbReference type="InParanoid" id="Q6P3X3"/>
<dbReference type="OMA" id="NNRYARA"/>
<dbReference type="OrthoDB" id="1936594at2759"/>
<dbReference type="PAN-GO" id="Q6P3X3">
    <property type="GO annotations" value="0 GO annotations based on evolutionary models"/>
</dbReference>
<dbReference type="PhylomeDB" id="Q6P3X3"/>
<dbReference type="TreeFam" id="TF105894"/>
<dbReference type="PathwayCommons" id="Q6P3X3"/>
<dbReference type="SignaLink" id="Q6P3X3"/>
<dbReference type="BioGRID-ORCS" id="55622">
    <property type="hits" value="825 hits in 1160 CRISPR screens"/>
</dbReference>
<dbReference type="ChiTaRS" id="TTC27">
    <property type="organism name" value="human"/>
</dbReference>
<dbReference type="GenomeRNAi" id="55622"/>
<dbReference type="Pharos" id="Q6P3X3">
    <property type="development level" value="Tdark"/>
</dbReference>
<dbReference type="PRO" id="PR:Q6P3X3"/>
<dbReference type="Proteomes" id="UP000005640">
    <property type="component" value="Chromosome 2"/>
</dbReference>
<dbReference type="RNAct" id="Q6P3X3">
    <property type="molecule type" value="protein"/>
</dbReference>
<dbReference type="Bgee" id="ENSG00000018699">
    <property type="expression patterns" value="Expressed in primordial germ cell in gonad and 169 other cell types or tissues"/>
</dbReference>
<dbReference type="ExpressionAtlas" id="Q6P3X3">
    <property type="expression patterns" value="baseline and differential"/>
</dbReference>
<dbReference type="Gene3D" id="1.25.40.10">
    <property type="entry name" value="Tetratricopeptide repeat domain"/>
    <property type="match status" value="1"/>
</dbReference>
<dbReference type="InterPro" id="IPR011990">
    <property type="entry name" value="TPR-like_helical_dom_sf"/>
</dbReference>
<dbReference type="InterPro" id="IPR019734">
    <property type="entry name" value="TPR_rpt"/>
</dbReference>
<dbReference type="InterPro" id="IPR044244">
    <property type="entry name" value="TTC27/Emw1"/>
</dbReference>
<dbReference type="PANTHER" id="PTHR16193">
    <property type="entry name" value="TETRATRICOPEPTIDE REPEAT PROTEIN 27"/>
    <property type="match status" value="1"/>
</dbReference>
<dbReference type="PANTHER" id="PTHR16193:SF0">
    <property type="entry name" value="TETRATRICOPEPTIDE REPEAT PROTEIN 27"/>
    <property type="match status" value="1"/>
</dbReference>
<dbReference type="Pfam" id="PF13432">
    <property type="entry name" value="TPR_16"/>
    <property type="match status" value="1"/>
</dbReference>
<dbReference type="SMART" id="SM00028">
    <property type="entry name" value="TPR"/>
    <property type="match status" value="4"/>
</dbReference>
<dbReference type="SUPFAM" id="SSF48452">
    <property type="entry name" value="TPR-like"/>
    <property type="match status" value="1"/>
</dbReference>
<dbReference type="PROSITE" id="PS50005">
    <property type="entry name" value="TPR"/>
    <property type="match status" value="4"/>
</dbReference>
<dbReference type="PROSITE" id="PS50293">
    <property type="entry name" value="TPR_REGION"/>
    <property type="match status" value="1"/>
</dbReference>
<sequence>MWTPELAILRGFPTEAERQQWKQEGVVGSESGSFLQLLLEGNYEAIFLNSMTQNIFNSTTTAEEKIDSYLEKQVVTFLDYSTDLDTTERQQLIFLLGVSSLQLFVQSNWTGPPVDLHPQDFLSSVLFQQFSEVKGLDAFVLSLLTLDGESIYSLTSKPILLLLARIILVNVRHKLTAIQSLPWWTLRCVNIHQHLLEERSPLLFTLAENCIDQVMKLQNLFVDDSGRYLAIQFHLECAYVFLYYYEYRKAKDQLDIAKDISQLQIDLTGALGKRTRFQENYVAQLILDVRREGDVLSNCEFTPAPTPQEHLTKNLELNDDTILNDIKLADCEQFQMPDLCAEEIAIILGICTNFQKNNPVHTLTEVELLAFTSCLLSQPKFWAIQTSALILRTKLEKGSTRRVERAMRQTQALADQFEDKTTSVLERLKIFYCCQVPPHWAIQRQLASLLFELGCTSSALQIFEKLEMWEDVVICYERAGQHGKAEEILRQELEKKETPSLYCLLGDVLGDHSCYDKAWELSRYRSARAQRSKALLHLRNKEFQECVECFERSVKINPMQLGVWFSLGCAYLALEDYQGSAKAFQRCVTLEPDNAEAWNNLSTSYIRLKQKVKAFRTLQEALKCNYEHWQIWENYILTSTDVGEFSEAIKAYHRLLDLRDKYKDVQVLKILVRAVIDGMTDRSGDVATGLKGKLQELFGRVTSRVTNDGEIWRLYAHVYGNGQSEKPDENEKAFQCLSKAYKCDTQSNCWEKDITSFKEVVQRALGLAHVAIKCSKNKSSSQEAVQMLSSVRLNLRGLLSKAKQLFTDVATGEMSRELADDITAMDTLVTELQDLSNQFRNQY</sequence>
<accession>Q6P3X3</accession>
<accession>A6NKJ0</accession>
<accession>Q96SS5</accession>
<accession>Q9BVF1</accession>
<accession>Q9NWR4</accession>
<accession>Q9NXG4</accession>
<comment type="interaction">
    <interactant intactId="EBI-1057046">
        <id>Q6P3X3</id>
    </interactant>
    <interactant intactId="EBI-5323863">
        <id>Q5S007</id>
        <label>LRRK2</label>
    </interactant>
    <organismsDiffer>false</organismsDiffer>
    <experiments>3</experiments>
</comment>
<comment type="similarity">
    <text evidence="2">Belongs to the TTC27 family.</text>
</comment>
<comment type="sequence caution" evidence="2">
    <conflict type="erroneous initiation">
        <sequence resource="EMBL-CDS" id="BAA91048"/>
    </conflict>
</comment>
<comment type="sequence caution" evidence="2">
    <conflict type="erroneous initiation">
        <sequence resource="EMBL-CDS" id="BAA91315"/>
    </conflict>
</comment>
<protein>
    <recommendedName>
        <fullName>Tetratricopeptide repeat protein 27</fullName>
        <shortName>TPR repeat protein 27</shortName>
    </recommendedName>
</protein>
<proteinExistence type="evidence at protein level"/>